<geneLocation type="chloroplast"/>
<dbReference type="EC" id="3.4.21.92"/>
<dbReference type="EMBL" id="L28803">
    <property type="protein sequence ID" value="AAA53086.1"/>
    <property type="molecule type" value="Genomic_DNA"/>
</dbReference>
<dbReference type="EMBL" id="FJ423446">
    <property type="protein sequence ID" value="ACJ50097.1"/>
    <property type="molecule type" value="Genomic_DNA"/>
</dbReference>
<dbReference type="EMBL" id="BK000554">
    <property type="protein sequence ID" value="DAA00910.1"/>
    <property type="molecule type" value="Genomic_DNA"/>
</dbReference>
<dbReference type="PIR" id="T07988">
    <property type="entry name" value="T07988"/>
</dbReference>
<dbReference type="RefSeq" id="NP_958364.1">
    <property type="nucleotide sequence ID" value="NC_005353.1"/>
</dbReference>
<dbReference type="PDB" id="7EKO">
    <property type="method" value="EM"/>
    <property type="resolution" value="3.30 A"/>
    <property type="chains" value="H/J/M=317-524"/>
</dbReference>
<dbReference type="PDB" id="7EKQ">
    <property type="method" value="EM"/>
    <property type="resolution" value="3.60 A"/>
    <property type="chains" value="H/J/M=317-524"/>
</dbReference>
<dbReference type="PDBsum" id="7EKO"/>
<dbReference type="PDBsum" id="7EKQ"/>
<dbReference type="EMDB" id="EMD-31171"/>
<dbReference type="EMDB" id="EMD-31173"/>
<dbReference type="SMR" id="P42380"/>
<dbReference type="STRING" id="3055.P42380"/>
<dbReference type="PaxDb" id="3055-DAA00910"/>
<dbReference type="GeneID" id="2717015"/>
<dbReference type="KEGG" id="cre:ChreCp007"/>
<dbReference type="eggNOG" id="KOG0840">
    <property type="taxonomic scope" value="Eukaryota"/>
</dbReference>
<dbReference type="HOGENOM" id="CLU_520112_0_0_1"/>
<dbReference type="InParanoid" id="P42380"/>
<dbReference type="BRENDA" id="3.4.21.92">
    <property type="organism ID" value="1318"/>
</dbReference>
<dbReference type="Proteomes" id="UP000006906">
    <property type="component" value="Chloroplast"/>
</dbReference>
<dbReference type="GO" id="GO:0009570">
    <property type="term" value="C:chloroplast stroma"/>
    <property type="evidence" value="ECO:0007669"/>
    <property type="project" value="UniProtKB-SubCell"/>
</dbReference>
<dbReference type="GO" id="GO:0009368">
    <property type="term" value="C:endopeptidase Clp complex"/>
    <property type="evidence" value="ECO:0000318"/>
    <property type="project" value="GO_Central"/>
</dbReference>
<dbReference type="GO" id="GO:0004176">
    <property type="term" value="F:ATP-dependent peptidase activity"/>
    <property type="evidence" value="ECO:0000318"/>
    <property type="project" value="GO_Central"/>
</dbReference>
<dbReference type="GO" id="GO:0051117">
    <property type="term" value="F:ATPase binding"/>
    <property type="evidence" value="ECO:0000318"/>
    <property type="project" value="GO_Central"/>
</dbReference>
<dbReference type="GO" id="GO:0004252">
    <property type="term" value="F:serine-type endopeptidase activity"/>
    <property type="evidence" value="ECO:0000318"/>
    <property type="project" value="GO_Central"/>
</dbReference>
<dbReference type="GO" id="GO:0006515">
    <property type="term" value="P:protein quality control for misfolded or incompletely synthesized proteins"/>
    <property type="evidence" value="ECO:0000318"/>
    <property type="project" value="GO_Central"/>
</dbReference>
<dbReference type="CDD" id="cd07017">
    <property type="entry name" value="S14_ClpP_2"/>
    <property type="match status" value="1"/>
</dbReference>
<dbReference type="Gene3D" id="3.90.226.10">
    <property type="entry name" value="2-enoyl-CoA Hydratase, Chain A, domain 1"/>
    <property type="match status" value="1"/>
</dbReference>
<dbReference type="InterPro" id="IPR001907">
    <property type="entry name" value="ClpP"/>
</dbReference>
<dbReference type="InterPro" id="IPR029045">
    <property type="entry name" value="ClpP/crotonase-like_dom_sf"/>
</dbReference>
<dbReference type="InterPro" id="IPR023562">
    <property type="entry name" value="ClpP/TepA"/>
</dbReference>
<dbReference type="InterPro" id="IPR033135">
    <property type="entry name" value="ClpP_His_AS"/>
</dbReference>
<dbReference type="InterPro" id="IPR018215">
    <property type="entry name" value="ClpP_Ser_AS"/>
</dbReference>
<dbReference type="PANTHER" id="PTHR10381">
    <property type="entry name" value="ATP-DEPENDENT CLP PROTEASE PROTEOLYTIC SUBUNIT"/>
    <property type="match status" value="1"/>
</dbReference>
<dbReference type="PANTHER" id="PTHR10381:SF11">
    <property type="entry name" value="ATP-DEPENDENT CLP PROTEASE PROTEOLYTIC SUBUNIT, MITOCHONDRIAL"/>
    <property type="match status" value="1"/>
</dbReference>
<dbReference type="Pfam" id="PF00574">
    <property type="entry name" value="CLP_protease"/>
    <property type="match status" value="1"/>
</dbReference>
<dbReference type="PRINTS" id="PR00127">
    <property type="entry name" value="CLPPROTEASEP"/>
</dbReference>
<dbReference type="SUPFAM" id="SSF52096">
    <property type="entry name" value="ClpP/crotonase"/>
    <property type="match status" value="1"/>
</dbReference>
<dbReference type="PROSITE" id="PS00382">
    <property type="entry name" value="CLP_PROTEASE_HIS"/>
    <property type="match status" value="1"/>
</dbReference>
<dbReference type="PROSITE" id="PS00381">
    <property type="entry name" value="CLP_PROTEASE_SER"/>
    <property type="match status" value="1"/>
</dbReference>
<organism>
    <name type="scientific">Chlamydomonas reinhardtii</name>
    <name type="common">Chlamydomonas smithii</name>
    <dbReference type="NCBI Taxonomy" id="3055"/>
    <lineage>
        <taxon>Eukaryota</taxon>
        <taxon>Viridiplantae</taxon>
        <taxon>Chlorophyta</taxon>
        <taxon>core chlorophytes</taxon>
        <taxon>Chlorophyceae</taxon>
        <taxon>CS clade</taxon>
        <taxon>Chlamydomonadales</taxon>
        <taxon>Chlamydomonadaceae</taxon>
        <taxon>Chlamydomonas</taxon>
    </lineage>
</organism>
<name>CLPP_CHLRE</name>
<accession>P42380</accession>
<accession>B7U1F0</accession>
<keyword id="KW-0002">3D-structure</keyword>
<keyword id="KW-0150">Chloroplast</keyword>
<keyword id="KW-0378">Hydrolase</keyword>
<keyword id="KW-0934">Plastid</keyword>
<keyword id="KW-0645">Protease</keyword>
<keyword id="KW-1185">Reference proteome</keyword>
<keyword id="KW-0720">Serine protease</keyword>
<feature type="chain" id="PRO_0000179737" description="ATP-dependent Clp protease proteolytic subunit">
    <location>
        <begin position="1"/>
        <end position="524"/>
    </location>
</feature>
<feature type="region of interest" description="Insertion IS1">
    <location>
        <begin position="60"/>
        <end position="345"/>
    </location>
</feature>
<feature type="region of interest" description="Disordered" evidence="4">
    <location>
        <begin position="74"/>
        <end position="96"/>
    </location>
</feature>
<feature type="compositionally biased region" description="Basic and acidic residues" evidence="4">
    <location>
        <begin position="82"/>
        <end position="91"/>
    </location>
</feature>
<feature type="active site" description="Nucleophile" evidence="2 3">
    <location>
        <position position="387"/>
    </location>
</feature>
<feature type="active site" evidence="1">
    <location>
        <position position="412"/>
    </location>
</feature>
<feature type="sequence variant" description="In strain: CC-503.">
    <original>R</original>
    <variation>Q</variation>
    <location>
        <position position="290"/>
    </location>
</feature>
<feature type="strand" evidence="6">
    <location>
        <begin position="348"/>
        <end position="356"/>
    </location>
</feature>
<feature type="helix" evidence="6">
    <location>
        <begin position="360"/>
        <end position="372"/>
    </location>
</feature>
<feature type="strand" evidence="6">
    <location>
        <begin position="373"/>
        <end position="385"/>
    </location>
</feature>
<feature type="helix" evidence="6">
    <location>
        <begin position="387"/>
        <end position="394"/>
    </location>
</feature>
<feature type="strand" evidence="6">
    <location>
        <begin position="401"/>
        <end position="403"/>
    </location>
</feature>
<feature type="strand" evidence="6">
    <location>
        <begin position="408"/>
        <end position="411"/>
    </location>
</feature>
<feature type="strand" evidence="6">
    <location>
        <begin position="415"/>
        <end position="420"/>
    </location>
</feature>
<feature type="helix" evidence="6">
    <location>
        <begin position="422"/>
        <end position="447"/>
    </location>
</feature>
<feature type="helix" evidence="6">
    <location>
        <begin position="451"/>
        <end position="457"/>
    </location>
</feature>
<feature type="strand" evidence="6">
    <location>
        <begin position="462"/>
        <end position="464"/>
    </location>
</feature>
<feature type="helix" evidence="6">
    <location>
        <begin position="466"/>
        <end position="472"/>
    </location>
</feature>
<feature type="helix" evidence="6">
    <location>
        <begin position="481"/>
        <end position="492"/>
    </location>
</feature>
<feature type="helix" evidence="6">
    <location>
        <begin position="494"/>
        <end position="509"/>
    </location>
</feature>
<sequence length="524" mass="59501">MPIGVPRIIYCWGEELPAQWTDIYNFIFRRRMVFLMQYLDDELCNQICGLLINIHMEDRSKELEKKEMEKSGLFKSGTAKTKGKDTVKKENLSGGASAKRQSVEDLLTSDNDFGIEENHLLEQYTLQKITTEWLNWNAQFFDYSDEPYLYYLADILSKDFSPNQDKDSANLNFAKSSANKQAFQNPAEMTKLIKNLKNLKNFSTGSKNVKQNLDVYSPFRLLANFAPQNYNLEHPNQNLAEIYSLLKTSTQNTNQPFTKKLIDNLSHKELMNRLQSPEKLVASSEKALGRRRLKQRYVQERLGSGGLSNSKALKAYNYLDQGALNNESGRSLYRKQTERVIQEEESKKVFMIINSFGGSVGNGITVHDALQFIKAGSLTLALGVAASAASLALAGGTIGERYVTEGCHTMIHQPEGGLNGQASDIWIDSQEIMKIRLDVAEIYSLSTYRPRHKILRDLDRDFYLTAMETIYYGLADEIATNEVMHSIVEMTNQVWSYHDSKQERLLESRASLVGDSTQTQESNS</sequence>
<comment type="function">
    <text evidence="1">Cleaves peptides in various proteins in a process that requires ATP hydrolysis. Has a chymotrypsin-like activity. Plays a major role in the degradation of misfolded proteins (By similarity).</text>
</comment>
<comment type="catalytic activity">
    <reaction evidence="2 3">
        <text>Hydrolysis of proteins to small peptides in the presence of ATP and magnesium. alpha-casein is the usual test substrate. In the absence of ATP, only oligopeptides shorter than five residues are hydrolyzed (such as succinyl-Leu-Tyr-|-NHMec, and Leu-Tyr-Leu-|-Tyr-Trp, in which cleavage of the -Tyr-|-Leu- and -Tyr-|-Trp bonds also occurs).</text>
        <dbReference type="EC" id="3.4.21.92"/>
    </reaction>
</comment>
<comment type="subunit">
    <text>Component of the chloroplastic Clp protease core complex.</text>
</comment>
<comment type="subcellular location">
    <subcellularLocation>
        <location evidence="1">Plastid</location>
        <location evidence="1">Chloroplast stroma</location>
    </subcellularLocation>
</comment>
<comment type="domain">
    <text>This gene contains one large insertion sequence (IS1) that divides the clpP gene into two sequence domains. The insertion sequence forms a continuous open reading frame with its upstream and downstream sequence domains.</text>
</comment>
<comment type="similarity">
    <text evidence="5">Belongs to the peptidase S14 family.</text>
</comment>
<gene>
    <name type="primary">clpP</name>
</gene>
<proteinExistence type="evidence at protein level"/>
<reference key="1">
    <citation type="journal article" date="1994" name="Mol. Gen. Genet.">
        <title>The Chlamydomonas chloroplast clpP gene contains translated large insertion sequences and is essential for cell growth.</title>
        <authorList>
            <person name="Huang C."/>
            <person name="Wang S."/>
            <person name="Chen L."/>
            <person name="Lemieux C."/>
            <person name="Otis C."/>
            <person name="Turmel M."/>
            <person name="Liu X.-Q."/>
        </authorList>
    </citation>
    <scope>NUCLEOTIDE SEQUENCE [GENOMIC DNA]</scope>
    <source>
        <strain>137c / CC-125</strain>
    </source>
</reference>
<reference key="2">
    <citation type="journal article" date="2009" name="BMC Evol. Biol.">
        <title>Nucleotide diversity of the Chlamydomonas reinhardtii plastid genome: addressing the mutational-hazard hypothesis.</title>
        <authorList>
            <person name="Smith D.R."/>
            <person name="Lee R.W."/>
        </authorList>
    </citation>
    <scope>NUCLEOTIDE SEQUENCE [LARGE SCALE GENOMIC DNA]</scope>
    <source>
        <strain>CC-503</strain>
    </source>
</reference>
<reference key="3">
    <citation type="journal article" date="2002" name="Plant Cell">
        <title>The Chlamydomonas reinhardtii plastid chromosome: islands of genes in a sea of repeats.</title>
        <authorList>
            <person name="Maul J.E."/>
            <person name="Lilly J.W."/>
            <person name="Cui L."/>
            <person name="dePamphilis C.W."/>
            <person name="Miller W."/>
            <person name="Harris E.H."/>
            <person name="Stern D.B."/>
        </authorList>
    </citation>
    <scope>IDENTIFICATION</scope>
    <scope>COMPLETE PLASTID GENOME</scope>
</reference>
<protein>
    <recommendedName>
        <fullName>ATP-dependent Clp protease proteolytic subunit</fullName>
        <ecNumber>3.4.21.92</ecNumber>
    </recommendedName>
    <alternativeName>
        <fullName>Endopeptidase Clp</fullName>
    </alternativeName>
</protein>
<evidence type="ECO:0000250" key="1"/>
<evidence type="ECO:0000255" key="2">
    <source>
        <dbReference type="PROSITE-ProRule" id="PRU10085"/>
    </source>
</evidence>
<evidence type="ECO:0000255" key="3">
    <source>
        <dbReference type="PROSITE-ProRule" id="PRU10086"/>
    </source>
</evidence>
<evidence type="ECO:0000256" key="4">
    <source>
        <dbReference type="SAM" id="MobiDB-lite"/>
    </source>
</evidence>
<evidence type="ECO:0000305" key="5"/>
<evidence type="ECO:0007829" key="6">
    <source>
        <dbReference type="PDB" id="7EKO"/>
    </source>
</evidence>